<dbReference type="EC" id="2.8.1.7" evidence="1"/>
<dbReference type="EMBL" id="AE016826">
    <property type="protein sequence ID" value="AAO27242.1"/>
    <property type="molecule type" value="Genomic_DNA"/>
</dbReference>
<dbReference type="RefSeq" id="WP_011091643.1">
    <property type="nucleotide sequence ID" value="NC_004545.1"/>
</dbReference>
<dbReference type="SMR" id="Q89A19"/>
<dbReference type="STRING" id="224915.bbp_544"/>
<dbReference type="KEGG" id="bab:bbp_544"/>
<dbReference type="eggNOG" id="COG1104">
    <property type="taxonomic scope" value="Bacteria"/>
</dbReference>
<dbReference type="HOGENOM" id="CLU_003433_0_2_6"/>
<dbReference type="OrthoDB" id="9808002at2"/>
<dbReference type="UniPathway" id="UPA00266"/>
<dbReference type="Proteomes" id="UP000000601">
    <property type="component" value="Chromosome"/>
</dbReference>
<dbReference type="GO" id="GO:1990221">
    <property type="term" value="C:L-cysteine desulfurase complex"/>
    <property type="evidence" value="ECO:0007669"/>
    <property type="project" value="UniProtKB-ARBA"/>
</dbReference>
<dbReference type="GO" id="GO:0051537">
    <property type="term" value="F:2 iron, 2 sulfur cluster binding"/>
    <property type="evidence" value="ECO:0007669"/>
    <property type="project" value="UniProtKB-UniRule"/>
</dbReference>
<dbReference type="GO" id="GO:0031071">
    <property type="term" value="F:cysteine desulfurase activity"/>
    <property type="evidence" value="ECO:0007669"/>
    <property type="project" value="UniProtKB-UniRule"/>
</dbReference>
<dbReference type="GO" id="GO:0046872">
    <property type="term" value="F:metal ion binding"/>
    <property type="evidence" value="ECO:0007669"/>
    <property type="project" value="UniProtKB-KW"/>
</dbReference>
<dbReference type="GO" id="GO:0030170">
    <property type="term" value="F:pyridoxal phosphate binding"/>
    <property type="evidence" value="ECO:0007669"/>
    <property type="project" value="UniProtKB-UniRule"/>
</dbReference>
<dbReference type="GO" id="GO:0044571">
    <property type="term" value="P:[2Fe-2S] cluster assembly"/>
    <property type="evidence" value="ECO:0007669"/>
    <property type="project" value="UniProtKB-UniRule"/>
</dbReference>
<dbReference type="FunFam" id="3.40.640.10:FF:000003">
    <property type="entry name" value="Cysteine desulfurase IscS"/>
    <property type="match status" value="1"/>
</dbReference>
<dbReference type="FunFam" id="3.90.1150.10:FF:000002">
    <property type="entry name" value="Cysteine desulfurase IscS"/>
    <property type="match status" value="1"/>
</dbReference>
<dbReference type="Gene3D" id="3.90.1150.10">
    <property type="entry name" value="Aspartate Aminotransferase, domain 1"/>
    <property type="match status" value="1"/>
</dbReference>
<dbReference type="Gene3D" id="3.40.640.10">
    <property type="entry name" value="Type I PLP-dependent aspartate aminotransferase-like (Major domain)"/>
    <property type="match status" value="1"/>
</dbReference>
<dbReference type="HAMAP" id="MF_00331">
    <property type="entry name" value="Cys_desulf_IscS"/>
    <property type="match status" value="1"/>
</dbReference>
<dbReference type="InterPro" id="IPR000192">
    <property type="entry name" value="Aminotrans_V_dom"/>
</dbReference>
<dbReference type="InterPro" id="IPR020578">
    <property type="entry name" value="Aminotrans_V_PyrdxlP_BS"/>
</dbReference>
<dbReference type="InterPro" id="IPR010240">
    <property type="entry name" value="Cys_deSase_IscS"/>
</dbReference>
<dbReference type="InterPro" id="IPR016454">
    <property type="entry name" value="Cysteine_dSase"/>
</dbReference>
<dbReference type="InterPro" id="IPR015424">
    <property type="entry name" value="PyrdxlP-dep_Trfase"/>
</dbReference>
<dbReference type="InterPro" id="IPR015421">
    <property type="entry name" value="PyrdxlP-dep_Trfase_major"/>
</dbReference>
<dbReference type="InterPro" id="IPR015422">
    <property type="entry name" value="PyrdxlP-dep_Trfase_small"/>
</dbReference>
<dbReference type="NCBIfam" id="TIGR02006">
    <property type="entry name" value="IscS"/>
    <property type="match status" value="1"/>
</dbReference>
<dbReference type="NCBIfam" id="NF002806">
    <property type="entry name" value="PRK02948.1"/>
    <property type="match status" value="1"/>
</dbReference>
<dbReference type="NCBIfam" id="NF010611">
    <property type="entry name" value="PRK14012.1"/>
    <property type="match status" value="1"/>
</dbReference>
<dbReference type="PANTHER" id="PTHR11601:SF34">
    <property type="entry name" value="CYSTEINE DESULFURASE"/>
    <property type="match status" value="1"/>
</dbReference>
<dbReference type="PANTHER" id="PTHR11601">
    <property type="entry name" value="CYSTEINE DESULFURYLASE FAMILY MEMBER"/>
    <property type="match status" value="1"/>
</dbReference>
<dbReference type="Pfam" id="PF00266">
    <property type="entry name" value="Aminotran_5"/>
    <property type="match status" value="1"/>
</dbReference>
<dbReference type="PIRSF" id="PIRSF005572">
    <property type="entry name" value="NifS"/>
    <property type="match status" value="1"/>
</dbReference>
<dbReference type="SUPFAM" id="SSF53383">
    <property type="entry name" value="PLP-dependent transferases"/>
    <property type="match status" value="1"/>
</dbReference>
<dbReference type="PROSITE" id="PS00595">
    <property type="entry name" value="AA_TRANSFER_CLASS_5"/>
    <property type="match status" value="1"/>
</dbReference>
<sequence length="404" mass="45678">MKFPIYLDYAATTPVEFEVMKEMMNYLTLEGEFGNPASRSHKFGWKAEEAVDIARNQIAELIHADSREIIFTSGATESNNLAIKGIAEFYKKKGNHIITCSTEHKATLDTCRYLENKGFDITYLNPLQNGTINIYELQEKIQKNTILVSIMHVNNEIGVIQDIHKISKICQSNNILFHVDAAQSIGKININLKQLKIDLMSFSAHKIYGPKGIGGLYIRRKPRVRLSAQIHGGGHEKGMRSGTLPVHQIVGMGIAYKIAKIKINSDFNYIKHLRNRLWNGIKNIEEIHLNSNFENTVPHILNVSFNYVEGESLIMALKNLAVSSGSACTSSSLEASYVLRSLGLKDELAHSSIRFSLGRFTTKEEIDYTIQLIHQSINRLRNLSPLWEMFKSGVDMNNVNWTHN</sequence>
<organism>
    <name type="scientific">Buchnera aphidicola subsp. Baizongia pistaciae (strain Bp)</name>
    <dbReference type="NCBI Taxonomy" id="224915"/>
    <lineage>
        <taxon>Bacteria</taxon>
        <taxon>Pseudomonadati</taxon>
        <taxon>Pseudomonadota</taxon>
        <taxon>Gammaproteobacteria</taxon>
        <taxon>Enterobacterales</taxon>
        <taxon>Erwiniaceae</taxon>
        <taxon>Buchnera</taxon>
    </lineage>
</organism>
<accession>Q89A19</accession>
<proteinExistence type="inferred from homology"/>
<protein>
    <recommendedName>
        <fullName evidence="1">Cysteine desulfurase IscS</fullName>
        <ecNumber evidence="1">2.8.1.7</ecNumber>
    </recommendedName>
</protein>
<keyword id="KW-0001">2Fe-2S</keyword>
<keyword id="KW-0963">Cytoplasm</keyword>
<keyword id="KW-0408">Iron</keyword>
<keyword id="KW-0411">Iron-sulfur</keyword>
<keyword id="KW-0479">Metal-binding</keyword>
<keyword id="KW-0663">Pyridoxal phosphate</keyword>
<keyword id="KW-1185">Reference proteome</keyword>
<keyword id="KW-0808">Transferase</keyword>
<gene>
    <name evidence="1" type="primary">iscS</name>
    <name type="synonym">nifS</name>
    <name type="ordered locus">bbp_544</name>
</gene>
<name>ISCS_BUCBP</name>
<evidence type="ECO:0000255" key="1">
    <source>
        <dbReference type="HAMAP-Rule" id="MF_00331"/>
    </source>
</evidence>
<feature type="chain" id="PRO_0000150263" description="Cysteine desulfurase IscS">
    <location>
        <begin position="1"/>
        <end position="404"/>
    </location>
</feature>
<feature type="active site" description="Cysteine persulfide intermediate" evidence="1">
    <location>
        <position position="328"/>
    </location>
</feature>
<feature type="binding site" evidence="1">
    <location>
        <begin position="75"/>
        <end position="76"/>
    </location>
    <ligand>
        <name>pyridoxal 5'-phosphate</name>
        <dbReference type="ChEBI" id="CHEBI:597326"/>
    </ligand>
</feature>
<feature type="binding site" evidence="1">
    <location>
        <position position="155"/>
    </location>
    <ligand>
        <name>pyridoxal 5'-phosphate</name>
        <dbReference type="ChEBI" id="CHEBI:597326"/>
    </ligand>
</feature>
<feature type="binding site" evidence="1">
    <location>
        <position position="183"/>
    </location>
    <ligand>
        <name>pyridoxal 5'-phosphate</name>
        <dbReference type="ChEBI" id="CHEBI:597326"/>
    </ligand>
</feature>
<feature type="binding site" evidence="1">
    <location>
        <begin position="203"/>
        <end position="205"/>
    </location>
    <ligand>
        <name>pyridoxal 5'-phosphate</name>
        <dbReference type="ChEBI" id="CHEBI:597326"/>
    </ligand>
</feature>
<feature type="binding site" evidence="1">
    <location>
        <position position="243"/>
    </location>
    <ligand>
        <name>pyridoxal 5'-phosphate</name>
        <dbReference type="ChEBI" id="CHEBI:597326"/>
    </ligand>
</feature>
<feature type="binding site" description="via persulfide group" evidence="1">
    <location>
        <position position="328"/>
    </location>
    <ligand>
        <name>[2Fe-2S] cluster</name>
        <dbReference type="ChEBI" id="CHEBI:190135"/>
        <note>ligand shared with IscU</note>
    </ligand>
</feature>
<feature type="modified residue" description="N6-(pyridoxal phosphate)lysine" evidence="1">
    <location>
        <position position="206"/>
    </location>
</feature>
<reference key="1">
    <citation type="journal article" date="2003" name="Proc. Natl. Acad. Sci. U.S.A.">
        <title>Reductive genome evolution in Buchnera aphidicola.</title>
        <authorList>
            <person name="van Ham R.C.H.J."/>
            <person name="Kamerbeek J."/>
            <person name="Palacios C."/>
            <person name="Rausell C."/>
            <person name="Abascal F."/>
            <person name="Bastolla U."/>
            <person name="Fernandez J.M."/>
            <person name="Jimenez L."/>
            <person name="Postigo M."/>
            <person name="Silva F.J."/>
            <person name="Tamames J."/>
            <person name="Viguera E."/>
            <person name="Latorre A."/>
            <person name="Valencia A."/>
            <person name="Moran F."/>
            <person name="Moya A."/>
        </authorList>
    </citation>
    <scope>NUCLEOTIDE SEQUENCE [LARGE SCALE GENOMIC DNA]</scope>
    <source>
        <strain>Bp</strain>
    </source>
</reference>
<comment type="function">
    <text evidence="1">Master enzyme that delivers sulfur to a number of partners involved in Fe-S cluster assembly, tRNA modification or cofactor biosynthesis. Catalyzes the removal of elemental sulfur atoms from cysteine to produce alanine. Functions as a sulfur delivery protein for Fe-S cluster synthesis onto IscU, an Fe-S scaffold assembly protein, as well as other S acceptor proteins.</text>
</comment>
<comment type="catalytic activity">
    <reaction evidence="1">
        <text>(sulfur carrier)-H + L-cysteine = (sulfur carrier)-SH + L-alanine</text>
        <dbReference type="Rhea" id="RHEA:43892"/>
        <dbReference type="Rhea" id="RHEA-COMP:14737"/>
        <dbReference type="Rhea" id="RHEA-COMP:14739"/>
        <dbReference type="ChEBI" id="CHEBI:29917"/>
        <dbReference type="ChEBI" id="CHEBI:35235"/>
        <dbReference type="ChEBI" id="CHEBI:57972"/>
        <dbReference type="ChEBI" id="CHEBI:64428"/>
        <dbReference type="EC" id="2.8.1.7"/>
    </reaction>
</comment>
<comment type="cofactor">
    <cofactor evidence="1">
        <name>pyridoxal 5'-phosphate</name>
        <dbReference type="ChEBI" id="CHEBI:597326"/>
    </cofactor>
</comment>
<comment type="pathway">
    <text evidence="1">Cofactor biosynthesis; iron-sulfur cluster biosynthesis.</text>
</comment>
<comment type="subunit">
    <text evidence="1">Homodimer. Forms a heterotetramer with IscU, interacts with other sulfur acceptors.</text>
</comment>
<comment type="subcellular location">
    <subcellularLocation>
        <location evidence="1">Cytoplasm</location>
    </subcellularLocation>
</comment>
<comment type="similarity">
    <text evidence="1">Belongs to the class-V pyridoxal-phosphate-dependent aminotransferase family. NifS/IscS subfamily.</text>
</comment>